<name>EREP1_MOUSE</name>
<evidence type="ECO:0000250" key="1">
    <source>
        <dbReference type="UniProtKB" id="Q15884"/>
    </source>
</evidence>
<evidence type="ECO:0000255" key="2"/>
<evidence type="ECO:0000256" key="3">
    <source>
        <dbReference type="SAM" id="MobiDB-lite"/>
    </source>
</evidence>
<evidence type="ECO:0000305" key="4"/>
<evidence type="ECO:0000312" key="5">
    <source>
        <dbReference type="EMBL" id="AAH99492.1"/>
    </source>
</evidence>
<evidence type="ECO:0000312" key="6">
    <source>
        <dbReference type="MGI" id="MGI:2685813"/>
    </source>
</evidence>
<comment type="function">
    <text evidence="1">Functions as an activator of the E3 ubiquitin protein ligase ITCH in the ubiquitination of the CXCL12-activated CXCR4 receptor. Thereby, triggers CXCR4 endocytosis and desensitization, negatively regulating the CXCL12/CXCR4 signaling pathway.</text>
</comment>
<comment type="subunit">
    <text evidence="1">Interacts with ITCH; enhances the ubiquitination of CXCR4 by ITCH and the subsequent endocytosis and desensitization of the receptor. Interacts with EPN1.</text>
</comment>
<comment type="subcellular location">
    <subcellularLocation>
        <location evidence="1">Early endosome membrane</location>
        <topology evidence="2">Single-pass type I membrane protein</topology>
    </subcellularLocation>
    <subcellularLocation>
        <location evidence="1">Late endosome membrane</location>
        <topology evidence="2">Single-pass type I membrane protein</topology>
    </subcellularLocation>
    <subcellularLocation>
        <location evidence="1">Recycling endosome membrane</location>
        <topology evidence="2">Single-pass type I membrane protein</topology>
    </subcellularLocation>
    <subcellularLocation>
        <location evidence="1">Cell membrane</location>
        <topology evidence="2">Single-pass type I membrane protein</topology>
    </subcellularLocation>
    <text evidence="1">Enriched in endosomes compared to the cell membrane.</text>
</comment>
<comment type="alternative products">
    <event type="alternative splicing"/>
    <isoform>
        <id>Q4FZH1-1</id>
        <name>1</name>
        <sequence type="displayed"/>
    </isoform>
    <isoform>
        <id>Q4FZH1-2</id>
        <name>2</name>
        <sequence type="described" ref="VSP_061675"/>
    </isoform>
</comment>
<comment type="domain">
    <text evidence="1">The cytoplasmic PPxY motifs mediate interaction with the WW domains of ITCH.</text>
</comment>
<comment type="miscellaneous">
    <molecule>Isoform 1</molecule>
    <text evidence="4">Gene prediction based on similarity to the human ortholog.</text>
</comment>
<comment type="miscellaneous">
    <molecule>Isoform 2</molecule>
    <text evidence="4">Gene prediction based on EST data.</text>
</comment>
<comment type="similarity">
    <text evidence="4">Belongs to the ENTREP family.</text>
</comment>
<comment type="sequence caution" evidence="4">
    <conflict type="erroneous initiation">
        <sequence resource="EMBL-CDS" id="AAH99492"/>
    </conflict>
    <text>Truncated N-terminus.</text>
</comment>
<reference key="1">
    <citation type="journal article" date="2009" name="PLoS Biol.">
        <title>Lineage-specific biology revealed by a finished genome assembly of the mouse.</title>
        <authorList>
            <person name="Church D.M."/>
            <person name="Goodstadt L."/>
            <person name="Hillier L.W."/>
            <person name="Zody M.C."/>
            <person name="Goldstein S."/>
            <person name="She X."/>
            <person name="Bult C.J."/>
            <person name="Agarwala R."/>
            <person name="Cherry J.L."/>
            <person name="DiCuccio M."/>
            <person name="Hlavina W."/>
            <person name="Kapustin Y."/>
            <person name="Meric P."/>
            <person name="Maglott D."/>
            <person name="Birtle Z."/>
            <person name="Marques A.C."/>
            <person name="Graves T."/>
            <person name="Zhou S."/>
            <person name="Teague B."/>
            <person name="Potamousis K."/>
            <person name="Churas C."/>
            <person name="Place M."/>
            <person name="Herschleb J."/>
            <person name="Runnheim R."/>
            <person name="Forrest D."/>
            <person name="Amos-Landgraf J."/>
            <person name="Schwartz D.C."/>
            <person name="Cheng Z."/>
            <person name="Lindblad-Toh K."/>
            <person name="Eichler E.E."/>
            <person name="Ponting C.P."/>
        </authorList>
    </citation>
    <scope>NUCLEOTIDE SEQUENCE [LARGE SCALE GENOMIC DNA]</scope>
    <source>
        <strain>C57BL/6J</strain>
    </source>
</reference>
<reference key="2">
    <citation type="journal article" date="2004" name="Genome Res.">
        <title>The status, quality, and expansion of the NIH full-length cDNA project: the Mammalian Gene Collection (MGC).</title>
        <authorList>
            <consortium name="The MGC Project Team"/>
        </authorList>
    </citation>
    <scope>NUCLEOTIDE SEQUENCE [LARGE SCALE MRNA] OF 121-451 (ISOFORM 1/2)</scope>
    <source>
        <tissue>Thyroid</tissue>
    </source>
</reference>
<dbReference type="EMBL" id="GL456185">
    <property type="status" value="NOT_ANNOTATED_CDS"/>
    <property type="molecule type" value="Genomic_DNA"/>
</dbReference>
<dbReference type="EMBL" id="BC099492">
    <property type="protein sequence ID" value="AAH99492.1"/>
    <property type="status" value="ALT_INIT"/>
    <property type="molecule type" value="mRNA"/>
</dbReference>
<dbReference type="CCDS" id="CCDS50408.1">
    <molecule id="Q4FZH1-2"/>
</dbReference>
<dbReference type="RefSeq" id="NP_001107646.1">
    <molecule id="Q4FZH1-2"/>
    <property type="nucleotide sequence ID" value="NM_001114174.1"/>
</dbReference>
<dbReference type="BioGRID" id="237825">
    <property type="interactions" value="2"/>
</dbReference>
<dbReference type="FunCoup" id="Q4FZH1">
    <property type="interactions" value="1"/>
</dbReference>
<dbReference type="STRING" id="10090.ENSMUSP00000093878"/>
<dbReference type="iPTMnet" id="Q4FZH1"/>
<dbReference type="PhosphoSitePlus" id="Q4FZH1"/>
<dbReference type="PaxDb" id="10090-ENSMUSP00000093878"/>
<dbReference type="ProteomicsDB" id="275989"/>
<dbReference type="ProteomicsDB" id="371758"/>
<dbReference type="Antibodypedia" id="26830">
    <property type="antibodies" value="44 antibodies from 15 providers"/>
</dbReference>
<dbReference type="Ensembl" id="ENSMUST00000096164.6">
    <molecule id="Q4FZH1-2"/>
    <property type="protein sequence ID" value="ENSMUSP00000093878.5"/>
    <property type="gene ID" value="ENSMUSG00000071604.6"/>
</dbReference>
<dbReference type="GeneID" id="381217"/>
<dbReference type="KEGG" id="mmu:381217"/>
<dbReference type="AGR" id="MGI:2685813"/>
<dbReference type="CTD" id="9413"/>
<dbReference type="MGI" id="MGI:2685813">
    <property type="gene designation" value="Entrep1"/>
</dbReference>
<dbReference type="VEuPathDB" id="HostDB:ENSMUSG00000071604"/>
<dbReference type="eggNOG" id="ENOG502QS0Q">
    <property type="taxonomic scope" value="Eukaryota"/>
</dbReference>
<dbReference type="GeneTree" id="ENSGT00530000063335"/>
<dbReference type="HOGENOM" id="CLU_025607_2_0_1"/>
<dbReference type="InParanoid" id="Q4FZH1"/>
<dbReference type="OMA" id="PCIDESQ"/>
<dbReference type="OrthoDB" id="83999at9989"/>
<dbReference type="PhylomeDB" id="Q4FZH1"/>
<dbReference type="TreeFam" id="TF332736"/>
<dbReference type="BioGRID-ORCS" id="381217">
    <property type="hits" value="6 hits in 79 CRISPR screens"/>
</dbReference>
<dbReference type="ChiTaRS" id="Fam189a2">
    <property type="organism name" value="mouse"/>
</dbReference>
<dbReference type="PRO" id="PR:Q4FZH1"/>
<dbReference type="Proteomes" id="UP000000589">
    <property type="component" value="Chromosome 19"/>
</dbReference>
<dbReference type="RNAct" id="Q4FZH1">
    <property type="molecule type" value="protein"/>
</dbReference>
<dbReference type="Bgee" id="ENSMUSG00000071604">
    <property type="expression patterns" value="Expressed in submandibular gland and 191 other cell types or tissues"/>
</dbReference>
<dbReference type="GO" id="GO:0031901">
    <property type="term" value="C:early endosome membrane"/>
    <property type="evidence" value="ECO:0000250"/>
    <property type="project" value="UniProtKB"/>
</dbReference>
<dbReference type="GO" id="GO:0031902">
    <property type="term" value="C:late endosome membrane"/>
    <property type="evidence" value="ECO:0000250"/>
    <property type="project" value="UniProtKB"/>
</dbReference>
<dbReference type="GO" id="GO:0005886">
    <property type="term" value="C:plasma membrane"/>
    <property type="evidence" value="ECO:0000250"/>
    <property type="project" value="UniProtKB"/>
</dbReference>
<dbReference type="GO" id="GO:0055038">
    <property type="term" value="C:recycling endosome membrane"/>
    <property type="evidence" value="ECO:0000250"/>
    <property type="project" value="UniProtKB"/>
</dbReference>
<dbReference type="GO" id="GO:1990757">
    <property type="term" value="F:ubiquitin ligase activator activity"/>
    <property type="evidence" value="ECO:0000250"/>
    <property type="project" value="UniProtKB"/>
</dbReference>
<dbReference type="GO" id="GO:0038160">
    <property type="term" value="P:CXCL12-activated CXCR4 signaling pathway"/>
    <property type="evidence" value="ECO:0007669"/>
    <property type="project" value="Ensembl"/>
</dbReference>
<dbReference type="GO" id="GO:0022401">
    <property type="term" value="P:negative adaptation of signaling pathway"/>
    <property type="evidence" value="ECO:0000250"/>
    <property type="project" value="UniProtKB"/>
</dbReference>
<dbReference type="GO" id="GO:0031623">
    <property type="term" value="P:receptor internalization"/>
    <property type="evidence" value="ECO:0000250"/>
    <property type="project" value="UniProtKB"/>
</dbReference>
<dbReference type="InterPro" id="IPR030431">
    <property type="entry name" value="ENTREP1-3"/>
</dbReference>
<dbReference type="PANTHER" id="PTHR17615:SF8">
    <property type="entry name" value="ENDOSOMAL TRANSMEMBRANE EPSIN INTERACTOR 1"/>
    <property type="match status" value="1"/>
</dbReference>
<dbReference type="PANTHER" id="PTHR17615">
    <property type="entry name" value="PROTEIN FAM189A"/>
    <property type="match status" value="1"/>
</dbReference>
<proteinExistence type="evidence at transcript level"/>
<accession>Q4FZH1</accession>
<accession>E9QP68</accession>
<protein>
    <recommendedName>
        <fullName evidence="1">Endosomal transmembrane epsin interactor 1</fullName>
    </recommendedName>
</protein>
<sequence length="451" mass="49804">MILLVNLFVLLSVVCILLNLAGFILGCQGAQFVSSVPRCDLVDLGEGKICFCCEEFQPAKCTDKENALKLFPVQPCSAVHLLLKKVLFALCALNALTTTVCLVAAALRYLQIFASRRPCIDESQMSAEDVEEHGRIPDPDDFVPPVPPPSYFATFYSCTPRMNRRMVGSDVIPLPHIYGARIKGVEVFCPLDPPPPYEAVVSQTDQEQESSFQMPEGPETAASPAEPVCTQITQGGALTNTTGEENTSGSTPILTLVQPPRSRRALPLLRTRSKSDPVLHHSEERATPVLSCEAATQTERRLDLATVTLRRGARPRASRCRPRSLIDYRSYIDTKLLVARFLEQSSCSMTPDIHELVENIKSVLKSDEGHMEEAITSASFLEQIMAPSQPSTSQAQELSWRRQPGLLHLRSCGDLSTFSLTARPRAERRPQQRAEAERPHSLIGVIRETVL</sequence>
<keyword id="KW-0025">Alternative splicing</keyword>
<keyword id="KW-1003">Cell membrane</keyword>
<keyword id="KW-0967">Endosome</keyword>
<keyword id="KW-1017">Isopeptide bond</keyword>
<keyword id="KW-0472">Membrane</keyword>
<keyword id="KW-0597">Phosphoprotein</keyword>
<keyword id="KW-1185">Reference proteome</keyword>
<keyword id="KW-0732">Signal</keyword>
<keyword id="KW-0812">Transmembrane</keyword>
<keyword id="KW-1133">Transmembrane helix</keyword>
<keyword id="KW-0832">Ubl conjugation</keyword>
<organism>
    <name type="scientific">Mus musculus</name>
    <name type="common">Mouse</name>
    <dbReference type="NCBI Taxonomy" id="10090"/>
    <lineage>
        <taxon>Eukaryota</taxon>
        <taxon>Metazoa</taxon>
        <taxon>Chordata</taxon>
        <taxon>Craniata</taxon>
        <taxon>Vertebrata</taxon>
        <taxon>Euteleostomi</taxon>
        <taxon>Mammalia</taxon>
        <taxon>Eutheria</taxon>
        <taxon>Euarchontoglires</taxon>
        <taxon>Glires</taxon>
        <taxon>Rodentia</taxon>
        <taxon>Myomorpha</taxon>
        <taxon>Muroidea</taxon>
        <taxon>Muridae</taxon>
        <taxon>Murinae</taxon>
        <taxon>Mus</taxon>
        <taxon>Mus</taxon>
    </lineage>
</organism>
<feature type="signal peptide" evidence="2">
    <location>
        <begin position="1"/>
        <end position="29"/>
    </location>
</feature>
<feature type="chain" id="PRO_0000089699" description="Endosomal transmembrane epsin interactor 1">
    <location>
        <begin position="30"/>
        <end position="451"/>
    </location>
</feature>
<feature type="topological domain" description="Lumenal" evidence="4">
    <location>
        <begin position="30"/>
        <end position="85"/>
    </location>
</feature>
<feature type="transmembrane region" description="Helical" evidence="2">
    <location>
        <begin position="86"/>
        <end position="106"/>
    </location>
</feature>
<feature type="topological domain" description="Cytoplasmic" evidence="4">
    <location>
        <begin position="107"/>
        <end position="451"/>
    </location>
</feature>
<feature type="region of interest" description="Mediates interaction with EPN1" evidence="1">
    <location>
        <begin position="107"/>
        <end position="451"/>
    </location>
</feature>
<feature type="region of interest" description="Disordered" evidence="3">
    <location>
        <begin position="204"/>
        <end position="224"/>
    </location>
</feature>
<feature type="short sequence motif" description="PPxY; mediates interaction with ITCH" evidence="1">
    <location>
        <begin position="148"/>
        <end position="151"/>
    </location>
</feature>
<feature type="short sequence motif" description="PPxY; mediates interaction with ITCH" evidence="1">
    <location>
        <begin position="194"/>
        <end position="197"/>
    </location>
</feature>
<feature type="compositionally biased region" description="Polar residues" evidence="3">
    <location>
        <begin position="204"/>
        <end position="213"/>
    </location>
</feature>
<feature type="modified residue" description="Phosphoserine" evidence="1">
    <location>
        <position position="275"/>
    </location>
</feature>
<feature type="cross-link" description="Glycyl lysine isopeptide (Lys-Gly) (interchain with G-Cter in ubiquitin)" evidence="1">
    <location>
        <position position="274"/>
    </location>
</feature>
<feature type="cross-link" description="Glycyl lysine isopeptide (Lys-Gly) (interchain with G-Cter in ubiquitin)" evidence="1">
    <location>
        <position position="365"/>
    </location>
</feature>
<feature type="splice variant" id="VSP_061675" description="In isoform 2.">
    <original>M</original>
    <variation>MSLPVVLPGSCCPVAGLSGGPQAGGPGAATAAAAQEPPLPPLRPRWPRGALQPPARPRCAPAAVLAPPPALASRRPAAPGSALLPARPLLSLGLLQLILGCCMVALSFGALSLSSSPQVKNSCPFWAGSSVILSGIIGLTTWKRPM</variation>
    <location>
        <position position="1"/>
    </location>
</feature>
<gene>
    <name evidence="1" type="primary">Entrep1</name>
    <name evidence="6" type="synonym">Fam189a2</name>
    <name evidence="5" type="synonym">Gm967</name>
</gene>